<comment type="similarity">
    <text evidence="2">Belongs to the WXG100 family.</text>
</comment>
<evidence type="ECO:0000256" key="1">
    <source>
        <dbReference type="SAM" id="MobiDB-lite"/>
    </source>
</evidence>
<evidence type="ECO:0000305" key="2"/>
<reference key="1">
    <citation type="submission" date="1994-09" db="EMBL/GenBank/DDBJ databases">
        <authorList>
            <person name="Smith D.R."/>
            <person name="Robison K."/>
        </authorList>
    </citation>
    <scope>NUCLEOTIDE SEQUENCE [GENOMIC DNA]</scope>
</reference>
<reference key="2">
    <citation type="journal article" date="2001" name="Nature">
        <title>Massive gene decay in the leprosy bacillus.</title>
        <authorList>
            <person name="Cole S.T."/>
            <person name="Eiglmeier K."/>
            <person name="Parkhill J."/>
            <person name="James K.D."/>
            <person name="Thomson N.R."/>
            <person name="Wheeler P.R."/>
            <person name="Honore N."/>
            <person name="Garnier T."/>
            <person name="Churcher C.M."/>
            <person name="Harris D.E."/>
            <person name="Mungall K.L."/>
            <person name="Basham D."/>
            <person name="Brown D."/>
            <person name="Chillingworth T."/>
            <person name="Connor R."/>
            <person name="Davies R.M."/>
            <person name="Devlin K."/>
            <person name="Duthoy S."/>
            <person name="Feltwell T."/>
            <person name="Fraser A."/>
            <person name="Hamlin N."/>
            <person name="Holroyd S."/>
            <person name="Hornsby T."/>
            <person name="Jagels K."/>
            <person name="Lacroix C."/>
            <person name="Maclean J."/>
            <person name="Moule S."/>
            <person name="Murphy L.D."/>
            <person name="Oliver K."/>
            <person name="Quail M.A."/>
            <person name="Rajandream M.A."/>
            <person name="Rutherford K.M."/>
            <person name="Rutter S."/>
            <person name="Seeger K."/>
            <person name="Simon S."/>
            <person name="Simmonds M."/>
            <person name="Skelton J."/>
            <person name="Squares R."/>
            <person name="Squares S."/>
            <person name="Stevens K."/>
            <person name="Taylor K."/>
            <person name="Whitehead S."/>
            <person name="Woodward J.R."/>
            <person name="Barrell B.G."/>
        </authorList>
    </citation>
    <scope>NUCLEOTIDE SEQUENCE [LARGE SCALE GENOMIC DNA]</scope>
    <source>
        <strain>TN</strain>
    </source>
</reference>
<keyword id="KW-1185">Reference proteome</keyword>
<organism>
    <name type="scientific">Mycobacterium leprae (strain TN)</name>
    <dbReference type="NCBI Taxonomy" id="272631"/>
    <lineage>
        <taxon>Bacteria</taxon>
        <taxon>Bacillati</taxon>
        <taxon>Actinomycetota</taxon>
        <taxon>Actinomycetes</taxon>
        <taxon>Mycobacteriales</taxon>
        <taxon>Mycobacteriaceae</taxon>
        <taxon>Mycobacterium</taxon>
    </lineage>
</organism>
<protein>
    <recommendedName>
        <fullName>Putative ESAT-6-like protein X</fullName>
    </recommendedName>
</protein>
<dbReference type="EMBL" id="U15180">
    <property type="protein sequence ID" value="AAA62902.1"/>
    <property type="molecule type" value="Genomic_DNA"/>
</dbReference>
<dbReference type="EMBL" id="AL049191">
    <property type="protein sequence ID" value="CAB39146.1"/>
    <property type="molecule type" value="Genomic_DNA"/>
</dbReference>
<dbReference type="EMBL" id="AL583920">
    <property type="protein sequence ID" value="CAC31437.1"/>
    <property type="molecule type" value="Genomic_DNA"/>
</dbReference>
<dbReference type="EMBL" id="AL583921">
    <property type="protein sequence ID" value="CAC31561.1"/>
    <property type="molecule type" value="Genomic_DNA"/>
</dbReference>
<dbReference type="PIR" id="T45170">
    <property type="entry name" value="T45170"/>
</dbReference>
<dbReference type="RefSeq" id="NP_301776.1">
    <property type="nucleotide sequence ID" value="NC_002677.1"/>
</dbReference>
<dbReference type="RefSeq" id="NP_301860.1">
    <property type="nucleotide sequence ID" value="NC_002677.1"/>
</dbReference>
<dbReference type="RefSeq" id="WP_010908100.1">
    <property type="nucleotide sequence ID" value="NC_002677.1"/>
</dbReference>
<dbReference type="SMR" id="Q49946"/>
<dbReference type="STRING" id="272631.gene:17574882"/>
<dbReference type="KEGG" id="mle:ML1056"/>
<dbReference type="KEGG" id="mle:ML1180"/>
<dbReference type="PATRIC" id="fig|272631.5.peg.1895"/>
<dbReference type="Leproma" id="ML1056"/>
<dbReference type="Leproma" id="ML1180"/>
<dbReference type="eggNOG" id="ENOG5032I3T">
    <property type="taxonomic scope" value="Bacteria"/>
</dbReference>
<dbReference type="HOGENOM" id="CLU_192559_0_0_11"/>
<dbReference type="OrthoDB" id="4625013at2"/>
<dbReference type="Proteomes" id="UP000000806">
    <property type="component" value="Chromosome"/>
</dbReference>
<dbReference type="Gene3D" id="1.10.287.1060">
    <property type="entry name" value="ESAT-6-like"/>
    <property type="match status" value="1"/>
</dbReference>
<dbReference type="InterPro" id="IPR009416">
    <property type="entry name" value="ESAT-6-like_Myco"/>
</dbReference>
<dbReference type="InterPro" id="IPR036689">
    <property type="entry name" value="ESAT-6-like_sf"/>
</dbReference>
<dbReference type="InterPro" id="IPR010310">
    <property type="entry name" value="T7SS_ESAT-6-like"/>
</dbReference>
<dbReference type="Pfam" id="PF06013">
    <property type="entry name" value="WXG100"/>
    <property type="match status" value="1"/>
</dbReference>
<dbReference type="PIRSF" id="PIRSF037656">
    <property type="entry name" value="DUF1066"/>
    <property type="match status" value="1"/>
</dbReference>
<dbReference type="SUPFAM" id="SSF140453">
    <property type="entry name" value="EsxAB dimer-like"/>
    <property type="match status" value="1"/>
</dbReference>
<name>ES6LX_MYCLE</name>
<feature type="chain" id="PRO_0000167821" description="Putative ESAT-6-like protein X">
    <location>
        <begin position="1"/>
        <end position="95"/>
    </location>
</feature>
<feature type="region of interest" description="Disordered" evidence="1">
    <location>
        <begin position="72"/>
        <end position="95"/>
    </location>
</feature>
<gene>
    <name type="ordered locus">ML1056</name>
    <name type="ORF">u1756d</name>
</gene>
<gene>
    <name type="ordered locus">ML1180</name>
    <name type="ORF">MLCB1701.06c</name>
</gene>
<proteinExistence type="inferred from homology"/>
<sequence>MGNINYQFGEIDAHGAAIRAQAAALETTHQAILATVRDAAEFWGGQGSTAHEMFIADLGRNFQMIYEQANSHGQKVQRASSSMADTDRSVSSAWS</sequence>
<accession>Q49946</accession>